<keyword id="KW-0255">Endonuclease</keyword>
<keyword id="KW-0378">Hydrolase</keyword>
<keyword id="KW-0540">Nuclease</keyword>
<keyword id="KW-1185">Reference proteome</keyword>
<keyword id="KW-0694">RNA-binding</keyword>
<keyword id="KW-0346">Stress response</keyword>
<keyword id="KW-1277">Toxin-antitoxin system</keyword>
<dbReference type="EC" id="3.1.-.-"/>
<dbReference type="EMBL" id="AE005174">
    <property type="status" value="NOT_ANNOTATED_CDS"/>
    <property type="molecule type" value="Genomic_DNA"/>
</dbReference>
<dbReference type="EMBL" id="BA000007">
    <property type="status" value="NOT_ANNOTATED_CDS"/>
    <property type="molecule type" value="Genomic_DNA"/>
</dbReference>
<dbReference type="RefSeq" id="WP_000813794.1">
    <property type="nucleotide sequence ID" value="NZ_VOAI01000022.1"/>
</dbReference>
<dbReference type="SMR" id="P0CJ67"/>
<dbReference type="GeneID" id="75202358"/>
<dbReference type="PATRIC" id="fig|83334.175.peg.2618"/>
<dbReference type="eggNOG" id="COG1724">
    <property type="taxonomic scope" value="Bacteria"/>
</dbReference>
<dbReference type="OMA" id="HGAKEMG"/>
<dbReference type="Proteomes" id="UP000000558">
    <property type="component" value="Chromosome"/>
</dbReference>
<dbReference type="Proteomes" id="UP000002519">
    <property type="component" value="Chromosome"/>
</dbReference>
<dbReference type="GO" id="GO:0004519">
    <property type="term" value="F:endonuclease activity"/>
    <property type="evidence" value="ECO:0007669"/>
    <property type="project" value="UniProtKB-KW"/>
</dbReference>
<dbReference type="GO" id="GO:0003729">
    <property type="term" value="F:mRNA binding"/>
    <property type="evidence" value="ECO:0007669"/>
    <property type="project" value="InterPro"/>
</dbReference>
<dbReference type="FunFam" id="3.30.920.30:FF:000001">
    <property type="entry name" value="Probable mRNA interferase HicA"/>
    <property type="match status" value="1"/>
</dbReference>
<dbReference type="Gene3D" id="3.30.920.30">
    <property type="entry name" value="Hypothetical protein"/>
    <property type="match status" value="1"/>
</dbReference>
<dbReference type="InterPro" id="IPR012933">
    <property type="entry name" value="HicA_mRNA_interferase"/>
</dbReference>
<dbReference type="InterPro" id="IPR038570">
    <property type="entry name" value="HicA_sf"/>
</dbReference>
<dbReference type="Pfam" id="PF07927">
    <property type="entry name" value="HicA_toxin"/>
    <property type="match status" value="1"/>
</dbReference>
<dbReference type="SUPFAM" id="SSF54786">
    <property type="entry name" value="YcfA/nrd intein domain"/>
    <property type="match status" value="1"/>
</dbReference>
<protein>
    <recommendedName>
        <fullName>Probable mRNA interferase HicA</fullName>
        <ecNumber>3.1.-.-</ecNumber>
    </recommendedName>
    <alternativeName>
        <fullName>Endoribonuclease HicA</fullName>
    </alternativeName>
    <alternativeName>
        <fullName>Toxin HicA</fullName>
    </alternativeName>
</protein>
<reference key="1">
    <citation type="journal article" date="2001" name="Nature">
        <title>Genome sequence of enterohaemorrhagic Escherichia coli O157:H7.</title>
        <authorList>
            <person name="Perna N.T."/>
            <person name="Plunkett G. III"/>
            <person name="Burland V."/>
            <person name="Mau B."/>
            <person name="Glasner J.D."/>
            <person name="Rose D.J."/>
            <person name="Mayhew G.F."/>
            <person name="Evans P.S."/>
            <person name="Gregor J."/>
            <person name="Kirkpatrick H.A."/>
            <person name="Posfai G."/>
            <person name="Hackett J."/>
            <person name="Klink S."/>
            <person name="Boutin A."/>
            <person name="Shao Y."/>
            <person name="Miller L."/>
            <person name="Grotbeck E.J."/>
            <person name="Davis N.W."/>
            <person name="Lim A."/>
            <person name="Dimalanta E.T."/>
            <person name="Potamousis K."/>
            <person name="Apodaca J."/>
            <person name="Anantharaman T.S."/>
            <person name="Lin J."/>
            <person name="Yen G."/>
            <person name="Schwartz D.C."/>
            <person name="Welch R.A."/>
            <person name="Blattner F.R."/>
        </authorList>
    </citation>
    <scope>NUCLEOTIDE SEQUENCE [LARGE SCALE GENOMIC DNA]</scope>
    <source>
        <strain>O157:H7 / EDL933 / ATCC 700927 / EHEC</strain>
    </source>
</reference>
<reference key="2">
    <citation type="journal article" date="2001" name="DNA Res.">
        <title>Complete genome sequence of enterohemorrhagic Escherichia coli O157:H7 and genomic comparison with a laboratory strain K-12.</title>
        <authorList>
            <person name="Hayashi T."/>
            <person name="Makino K."/>
            <person name="Ohnishi M."/>
            <person name="Kurokawa K."/>
            <person name="Ishii K."/>
            <person name="Yokoyama K."/>
            <person name="Han C.-G."/>
            <person name="Ohtsubo E."/>
            <person name="Nakayama K."/>
            <person name="Murata T."/>
            <person name="Tanaka M."/>
            <person name="Tobe T."/>
            <person name="Iida T."/>
            <person name="Takami H."/>
            <person name="Honda T."/>
            <person name="Sasakawa C."/>
            <person name="Ogasawara N."/>
            <person name="Yasunaga T."/>
            <person name="Kuhara S."/>
            <person name="Shiba T."/>
            <person name="Hattori M."/>
            <person name="Shinagawa H."/>
        </authorList>
    </citation>
    <scope>NUCLEOTIDE SEQUENCE [LARGE SCALE GENOMIC DNA]</scope>
    <source>
        <strain>O157:H7 / Sakai / RIMD 0509952 / EHEC</strain>
    </source>
</reference>
<gene>
    <name type="primary">hicA</name>
    <name type="ordered locus">Z2280.1</name>
    <name type="ordered locus">ECs2041.1</name>
</gene>
<comment type="function">
    <text evidence="1">Toxic component of a type II toxin-antitoxin (TA) system. A probable translation-independent mRNA interferase (By similarity).</text>
</comment>
<comment type="subunit">
    <text evidence="1">Probably forms a complex with the antitoxin HicB which inhibits the mRNA interferase activity.</text>
</comment>
<comment type="similarity">
    <text evidence="2">Belongs to the HicA mRNA interferase family.</text>
</comment>
<sequence length="58" mass="6782">MKQSEFRRWLESQGVDVANGSNHLKLRFHGRRSVMPRHPCDEIKEPLRKAILKQLGLS</sequence>
<feature type="chain" id="PRO_0000404519" description="Probable mRNA interferase HicA">
    <location>
        <begin position="1"/>
        <end position="58"/>
    </location>
</feature>
<organism>
    <name type="scientific">Escherichia coli O157:H7</name>
    <dbReference type="NCBI Taxonomy" id="83334"/>
    <lineage>
        <taxon>Bacteria</taxon>
        <taxon>Pseudomonadati</taxon>
        <taxon>Pseudomonadota</taxon>
        <taxon>Gammaproteobacteria</taxon>
        <taxon>Enterobacterales</taxon>
        <taxon>Enterobacteriaceae</taxon>
        <taxon>Escherichia</taxon>
    </lineage>
</organism>
<accession>P0CJ67</accession>
<name>HICA_ECO57</name>
<proteinExistence type="inferred from homology"/>
<evidence type="ECO:0000250" key="1"/>
<evidence type="ECO:0000305" key="2"/>